<proteinExistence type="inferred from homology"/>
<name>CRR49_ARATH</name>
<evidence type="ECO:0000255" key="1"/>
<evidence type="ECO:0000255" key="2">
    <source>
        <dbReference type="PROSITE-ProRule" id="PRU00806"/>
    </source>
</evidence>
<evidence type="ECO:0000305" key="3"/>
<sequence>MSSVFGSVHILAMIAIQLLLTHSVSSLNLTNAYLHHKCSNTQGKYKQGSAFEKNLNLVLSTITSIGNFRDGFRYTEEGEDPNNVFVMFQCRGDSYWSKCPPCISTAVSGLRRRCPRNKGAIIWYDQCLLKISSVASFNKIDYENDFYLSNPNNMSDRGLFNKETSALLEKLAYKASDRNNLDGKQLVLYAAGEKRIGTKKVYAMVQCTKDLIFTKCFECLEGILRKFPQCCDGKRGGRVFGTSCNFRYELYPFLRN</sequence>
<accession>P0CJ56</accession>
<accession>F4JVK9</accession>
<accession>Q680R8</accession>
<accession>Q9S7J6</accession>
<accession>Q9SUM6</accession>
<feature type="signal peptide" evidence="1">
    <location>
        <begin position="1"/>
        <end position="26"/>
    </location>
</feature>
<feature type="chain" id="PRO_0000403945" description="Cysteine-rich repeat secretory protein 49">
    <location>
        <begin position="27"/>
        <end position="256"/>
    </location>
</feature>
<feature type="domain" description="Gnk2-homologous 1" evidence="2">
    <location>
        <begin position="33"/>
        <end position="136"/>
    </location>
</feature>
<feature type="domain" description="Gnk2-homologous 2" evidence="2">
    <location>
        <begin position="142"/>
        <end position="253"/>
    </location>
</feature>
<keyword id="KW-1185">Reference proteome</keyword>
<keyword id="KW-0677">Repeat</keyword>
<keyword id="KW-0964">Secreted</keyword>
<keyword id="KW-0732">Signal</keyword>
<comment type="subcellular location">
    <subcellularLocation>
        <location evidence="3">Secreted</location>
    </subcellularLocation>
</comment>
<comment type="similarity">
    <text evidence="3">Belongs to the cysteine-rich repeat secretory protein family.</text>
</comment>
<comment type="sequence caution" evidence="3">
    <conflict type="erroneous gene model prediction">
        <sequence resource="EMBL-CDS" id="CAB45824"/>
    </conflict>
</comment>
<comment type="sequence caution" evidence="3">
    <conflict type="erroneous gene model prediction">
        <sequence resource="EMBL-CDS" id="CAB79058"/>
    </conflict>
</comment>
<gene>
    <name type="primary">CRRSP49</name>
    <name type="ordered locus">At4g20580</name>
    <name type="ORF">F9F13.230</name>
</gene>
<protein>
    <recommendedName>
        <fullName>Cysteine-rich repeat secretory protein 49</fullName>
    </recommendedName>
</protein>
<reference key="1">
    <citation type="journal article" date="1999" name="Nature">
        <title>Sequence and analysis of chromosome 4 of the plant Arabidopsis thaliana.</title>
        <authorList>
            <person name="Mayer K.F.X."/>
            <person name="Schueller C."/>
            <person name="Wambutt R."/>
            <person name="Murphy G."/>
            <person name="Volckaert G."/>
            <person name="Pohl T."/>
            <person name="Duesterhoeft A."/>
            <person name="Stiekema W."/>
            <person name="Entian K.-D."/>
            <person name="Terryn N."/>
            <person name="Harris B."/>
            <person name="Ansorge W."/>
            <person name="Brandt P."/>
            <person name="Grivell L.A."/>
            <person name="Rieger M."/>
            <person name="Weichselgartner M."/>
            <person name="de Simone V."/>
            <person name="Obermaier B."/>
            <person name="Mache R."/>
            <person name="Mueller M."/>
            <person name="Kreis M."/>
            <person name="Delseny M."/>
            <person name="Puigdomenech P."/>
            <person name="Watson M."/>
            <person name="Schmidtheini T."/>
            <person name="Reichert B."/>
            <person name="Portetelle D."/>
            <person name="Perez-Alonso M."/>
            <person name="Boutry M."/>
            <person name="Bancroft I."/>
            <person name="Vos P."/>
            <person name="Hoheisel J."/>
            <person name="Zimmermann W."/>
            <person name="Wedler H."/>
            <person name="Ridley P."/>
            <person name="Langham S.-A."/>
            <person name="McCullagh B."/>
            <person name="Bilham L."/>
            <person name="Robben J."/>
            <person name="van der Schueren J."/>
            <person name="Grymonprez B."/>
            <person name="Chuang Y.-J."/>
            <person name="Vandenbussche F."/>
            <person name="Braeken M."/>
            <person name="Weltjens I."/>
            <person name="Voet M."/>
            <person name="Bastiaens I."/>
            <person name="Aert R."/>
            <person name="Defoor E."/>
            <person name="Weitzenegger T."/>
            <person name="Bothe G."/>
            <person name="Ramsperger U."/>
            <person name="Hilbert H."/>
            <person name="Braun M."/>
            <person name="Holzer E."/>
            <person name="Brandt A."/>
            <person name="Peters S."/>
            <person name="van Staveren M."/>
            <person name="Dirkse W."/>
            <person name="Mooijman P."/>
            <person name="Klein Lankhorst R."/>
            <person name="Rose M."/>
            <person name="Hauf J."/>
            <person name="Koetter P."/>
            <person name="Berneiser S."/>
            <person name="Hempel S."/>
            <person name="Feldpausch M."/>
            <person name="Lamberth S."/>
            <person name="Van den Daele H."/>
            <person name="De Keyser A."/>
            <person name="Buysshaert C."/>
            <person name="Gielen J."/>
            <person name="Villarroel R."/>
            <person name="De Clercq R."/>
            <person name="van Montagu M."/>
            <person name="Rogers J."/>
            <person name="Cronin A."/>
            <person name="Quail M.A."/>
            <person name="Bray-Allen S."/>
            <person name="Clark L."/>
            <person name="Doggett J."/>
            <person name="Hall S."/>
            <person name="Kay M."/>
            <person name="Lennard N."/>
            <person name="McLay K."/>
            <person name="Mayes R."/>
            <person name="Pettett A."/>
            <person name="Rajandream M.A."/>
            <person name="Lyne M."/>
            <person name="Benes V."/>
            <person name="Rechmann S."/>
            <person name="Borkova D."/>
            <person name="Bloecker H."/>
            <person name="Scharfe M."/>
            <person name="Grimm M."/>
            <person name="Loehnert T.-H."/>
            <person name="Dose S."/>
            <person name="de Haan M."/>
            <person name="Maarse A.C."/>
            <person name="Schaefer M."/>
            <person name="Mueller-Auer S."/>
            <person name="Gabel C."/>
            <person name="Fuchs M."/>
            <person name="Fartmann B."/>
            <person name="Granderath K."/>
            <person name="Dauner D."/>
            <person name="Herzl A."/>
            <person name="Neumann S."/>
            <person name="Argiriou A."/>
            <person name="Vitale D."/>
            <person name="Liguori R."/>
            <person name="Piravandi E."/>
            <person name="Massenet O."/>
            <person name="Quigley F."/>
            <person name="Clabauld G."/>
            <person name="Muendlein A."/>
            <person name="Felber R."/>
            <person name="Schnabl S."/>
            <person name="Hiller R."/>
            <person name="Schmidt W."/>
            <person name="Lecharny A."/>
            <person name="Aubourg S."/>
            <person name="Chefdor F."/>
            <person name="Cooke R."/>
            <person name="Berger C."/>
            <person name="Monfort A."/>
            <person name="Casacuberta E."/>
            <person name="Gibbons T."/>
            <person name="Weber N."/>
            <person name="Vandenbol M."/>
            <person name="Bargues M."/>
            <person name="Terol J."/>
            <person name="Torres A."/>
            <person name="Perez-Perez A."/>
            <person name="Purnelle B."/>
            <person name="Bent E."/>
            <person name="Johnson S."/>
            <person name="Tacon D."/>
            <person name="Jesse T."/>
            <person name="Heijnen L."/>
            <person name="Schwarz S."/>
            <person name="Scholler P."/>
            <person name="Heber S."/>
            <person name="Francs P."/>
            <person name="Bielke C."/>
            <person name="Frishman D."/>
            <person name="Haase D."/>
            <person name="Lemcke K."/>
            <person name="Mewes H.-W."/>
            <person name="Stocker S."/>
            <person name="Zaccaria P."/>
            <person name="Bevan M."/>
            <person name="Wilson R.K."/>
            <person name="de la Bastide M."/>
            <person name="Habermann K."/>
            <person name="Parnell L."/>
            <person name="Dedhia N."/>
            <person name="Gnoj L."/>
            <person name="Schutz K."/>
            <person name="Huang E."/>
            <person name="Spiegel L."/>
            <person name="Sekhon M."/>
            <person name="Murray J."/>
            <person name="Sheet P."/>
            <person name="Cordes M."/>
            <person name="Abu-Threideh J."/>
            <person name="Stoneking T."/>
            <person name="Kalicki J."/>
            <person name="Graves T."/>
            <person name="Harmon G."/>
            <person name="Edwards J."/>
            <person name="Latreille P."/>
            <person name="Courtney L."/>
            <person name="Cloud J."/>
            <person name="Abbott A."/>
            <person name="Scott K."/>
            <person name="Johnson D."/>
            <person name="Minx P."/>
            <person name="Bentley D."/>
            <person name="Fulton B."/>
            <person name="Miller N."/>
            <person name="Greco T."/>
            <person name="Kemp K."/>
            <person name="Kramer J."/>
            <person name="Fulton L."/>
            <person name="Mardis E."/>
            <person name="Dante M."/>
            <person name="Pepin K."/>
            <person name="Hillier L.W."/>
            <person name="Nelson J."/>
            <person name="Spieth J."/>
            <person name="Ryan E."/>
            <person name="Andrews S."/>
            <person name="Geisel C."/>
            <person name="Layman D."/>
            <person name="Du H."/>
            <person name="Ali J."/>
            <person name="Berghoff A."/>
            <person name="Jones K."/>
            <person name="Drone K."/>
            <person name="Cotton M."/>
            <person name="Joshu C."/>
            <person name="Antonoiu B."/>
            <person name="Zidanic M."/>
            <person name="Strong C."/>
            <person name="Sun H."/>
            <person name="Lamar B."/>
            <person name="Yordan C."/>
            <person name="Ma P."/>
            <person name="Zhong J."/>
            <person name="Preston R."/>
            <person name="Vil D."/>
            <person name="Shekher M."/>
            <person name="Matero A."/>
            <person name="Shah R."/>
            <person name="Swaby I.K."/>
            <person name="O'Shaughnessy A."/>
            <person name="Rodriguez M."/>
            <person name="Hoffman J."/>
            <person name="Till S."/>
            <person name="Granat S."/>
            <person name="Shohdy N."/>
            <person name="Hasegawa A."/>
            <person name="Hameed A."/>
            <person name="Lodhi M."/>
            <person name="Johnson A."/>
            <person name="Chen E."/>
            <person name="Marra M.A."/>
            <person name="Martienssen R."/>
            <person name="McCombie W.R."/>
        </authorList>
    </citation>
    <scope>NUCLEOTIDE SEQUENCE [LARGE SCALE GENOMIC DNA]</scope>
    <source>
        <strain>cv. Columbia</strain>
    </source>
</reference>
<reference key="2">
    <citation type="journal article" date="2017" name="Plant J.">
        <title>Araport11: a complete reannotation of the Arabidopsis thaliana reference genome.</title>
        <authorList>
            <person name="Cheng C.Y."/>
            <person name="Krishnakumar V."/>
            <person name="Chan A.P."/>
            <person name="Thibaud-Nissen F."/>
            <person name="Schobel S."/>
            <person name="Town C.D."/>
        </authorList>
    </citation>
    <scope>GENOME REANNOTATION</scope>
    <source>
        <strain>cv. Columbia</strain>
    </source>
</reference>
<reference key="3">
    <citation type="journal article" date="2001" name="Plant Physiol.">
        <title>A superfamily of proteins with novel cysteine-rich repeats.</title>
        <authorList>
            <person name="Chen Z."/>
        </authorList>
    </citation>
    <scope>GENE FAMILY ORGANIZATION</scope>
    <scope>NOMENCLATURE</scope>
</reference>
<organism>
    <name type="scientific">Arabidopsis thaliana</name>
    <name type="common">Mouse-ear cress</name>
    <dbReference type="NCBI Taxonomy" id="3702"/>
    <lineage>
        <taxon>Eukaryota</taxon>
        <taxon>Viridiplantae</taxon>
        <taxon>Streptophyta</taxon>
        <taxon>Embryophyta</taxon>
        <taxon>Tracheophyta</taxon>
        <taxon>Spermatophyta</taxon>
        <taxon>Magnoliopsida</taxon>
        <taxon>eudicotyledons</taxon>
        <taxon>Gunneridae</taxon>
        <taxon>Pentapetalae</taxon>
        <taxon>rosids</taxon>
        <taxon>malvids</taxon>
        <taxon>Brassicales</taxon>
        <taxon>Brassicaceae</taxon>
        <taxon>Camelineae</taxon>
        <taxon>Arabidopsis</taxon>
    </lineage>
</organism>
<dbReference type="EMBL" id="AL080253">
    <property type="protein sequence ID" value="CAB45824.1"/>
    <property type="status" value="ALT_SEQ"/>
    <property type="molecule type" value="Genomic_DNA"/>
</dbReference>
<dbReference type="EMBL" id="AL161553">
    <property type="protein sequence ID" value="CAB79058.1"/>
    <property type="status" value="ALT_SEQ"/>
    <property type="molecule type" value="Genomic_DNA"/>
</dbReference>
<dbReference type="EMBL" id="CP002687">
    <property type="protein sequence ID" value="AEE84344.2"/>
    <property type="molecule type" value="Genomic_DNA"/>
</dbReference>
<dbReference type="PIR" id="T10595">
    <property type="entry name" value="T10595"/>
</dbReference>
<dbReference type="RefSeq" id="NP_001320013.1">
    <property type="nucleotide sequence ID" value="NM_001341449.1"/>
</dbReference>
<dbReference type="RefSeq" id="NP_567608.3">
    <property type="nucleotide sequence ID" value="NM_118177.3"/>
</dbReference>
<dbReference type="RefSeq" id="NP_567609.3">
    <property type="nucleotide sequence ID" value="NM_118178.3"/>
</dbReference>
<dbReference type="RefSeq" id="NP_567610.3">
    <property type="nucleotide sequence ID" value="NM_118179.3"/>
</dbReference>
<dbReference type="RefSeq" id="NP_567611.3">
    <property type="nucleotide sequence ID" value="NM_118180.3"/>
</dbReference>
<dbReference type="RefSeq" id="NP_567612.3">
    <property type="nucleotide sequence ID" value="NM_118181.3"/>
</dbReference>
<dbReference type="RefSeq" id="NP_567614.3">
    <property type="nucleotide sequence ID" value="NM_118183.3"/>
</dbReference>
<dbReference type="SMR" id="P0CJ56"/>
<dbReference type="EnsemblPlants" id="AT4G20580.1">
    <property type="protein sequence ID" value="AT4G20580.1"/>
    <property type="gene ID" value="AT4G20580"/>
</dbReference>
<dbReference type="EnsemblPlants" id="AT4G20590.1">
    <property type="protein sequence ID" value="AT4G20590.1"/>
    <property type="gene ID" value="AT4G20590"/>
</dbReference>
<dbReference type="EnsemblPlants" id="AT4G20600.1">
    <property type="protein sequence ID" value="AT4G20600.1"/>
    <property type="gene ID" value="AT4G20600"/>
</dbReference>
<dbReference type="EnsemblPlants" id="AT4G20610.1">
    <property type="protein sequence ID" value="AT4G20610.1"/>
    <property type="gene ID" value="AT4G20610"/>
</dbReference>
<dbReference type="EnsemblPlants" id="AT4G20620.1">
    <property type="protein sequence ID" value="AT4G20620.1"/>
    <property type="gene ID" value="AT4G20620"/>
</dbReference>
<dbReference type="EnsemblPlants" id="AT4G20630.1">
    <property type="protein sequence ID" value="AT4G20630.1"/>
    <property type="gene ID" value="AT4G20630"/>
</dbReference>
<dbReference type="EnsemblPlants" id="AT4G20640.1">
    <property type="protein sequence ID" value="AT4G20640.1"/>
    <property type="gene ID" value="AT4G20640"/>
</dbReference>
<dbReference type="GeneID" id="827806"/>
<dbReference type="Gramene" id="AT4G20580.1">
    <property type="protein sequence ID" value="AT4G20580.1"/>
    <property type="gene ID" value="AT4G20580"/>
</dbReference>
<dbReference type="Gramene" id="AT4G20590.1">
    <property type="protein sequence ID" value="AT4G20590.1"/>
    <property type="gene ID" value="AT4G20590"/>
</dbReference>
<dbReference type="Gramene" id="AT4G20600.1">
    <property type="protein sequence ID" value="AT4G20600.1"/>
    <property type="gene ID" value="AT4G20600"/>
</dbReference>
<dbReference type="Gramene" id="AT4G20610.1">
    <property type="protein sequence ID" value="AT4G20610.1"/>
    <property type="gene ID" value="AT4G20610"/>
</dbReference>
<dbReference type="Gramene" id="AT4G20620.1">
    <property type="protein sequence ID" value="AT4G20620.1"/>
    <property type="gene ID" value="AT4G20620"/>
</dbReference>
<dbReference type="Gramene" id="AT4G20630.1">
    <property type="protein sequence ID" value="AT4G20630.1"/>
    <property type="gene ID" value="AT4G20630"/>
</dbReference>
<dbReference type="Gramene" id="AT4G20640.1">
    <property type="protein sequence ID" value="AT4G20640.1"/>
    <property type="gene ID" value="AT4G20640"/>
</dbReference>
<dbReference type="KEGG" id="ath:AT4G20580"/>
<dbReference type="KEGG" id="ath:AT4G20590"/>
<dbReference type="KEGG" id="ath:AT4G20600"/>
<dbReference type="KEGG" id="ath:AT4G20610"/>
<dbReference type="KEGG" id="ath:AT4G20620"/>
<dbReference type="KEGG" id="ath:AT4G20630"/>
<dbReference type="KEGG" id="ath:AT4G20640"/>
<dbReference type="Araport" id="AT4G20580"/>
<dbReference type="TAIR" id="AT4G20580"/>
<dbReference type="HOGENOM" id="CLU_000288_35_0_1"/>
<dbReference type="InParanoid" id="P0CJ56"/>
<dbReference type="OMA" id="FIQVWNI"/>
<dbReference type="PRO" id="PR:P0CJ56"/>
<dbReference type="Proteomes" id="UP000006548">
    <property type="component" value="Chromosome 4"/>
</dbReference>
<dbReference type="ExpressionAtlas" id="P0CJ56">
    <property type="expression patterns" value="baseline"/>
</dbReference>
<dbReference type="GO" id="GO:0005576">
    <property type="term" value="C:extracellular region"/>
    <property type="evidence" value="ECO:0007669"/>
    <property type="project" value="UniProtKB-SubCell"/>
</dbReference>
<dbReference type="CDD" id="cd23509">
    <property type="entry name" value="Gnk2-like"/>
    <property type="match status" value="2"/>
</dbReference>
<dbReference type="FunFam" id="3.30.430.20:FF:000002">
    <property type="entry name" value="Cysteine-rich receptor-like protein kinase 10"/>
    <property type="match status" value="1"/>
</dbReference>
<dbReference type="Gene3D" id="3.30.430.20">
    <property type="entry name" value="Gnk2 domain, C-X8-C-X2-C motif"/>
    <property type="match status" value="2"/>
</dbReference>
<dbReference type="InterPro" id="IPR050581">
    <property type="entry name" value="CRR_secretory_protein"/>
</dbReference>
<dbReference type="InterPro" id="IPR002902">
    <property type="entry name" value="GNK2"/>
</dbReference>
<dbReference type="InterPro" id="IPR038408">
    <property type="entry name" value="GNK2_sf"/>
</dbReference>
<dbReference type="PANTHER" id="PTHR32411:SF54">
    <property type="entry name" value="CYSTEINE-RICH REPEAT SECRETORY PROTEIN 29-RELATED"/>
    <property type="match status" value="1"/>
</dbReference>
<dbReference type="PANTHER" id="PTHR32411">
    <property type="entry name" value="CYSTEINE-RICH REPEAT SECRETORY PROTEIN 38-RELATED"/>
    <property type="match status" value="1"/>
</dbReference>
<dbReference type="Pfam" id="PF01657">
    <property type="entry name" value="Stress-antifung"/>
    <property type="match status" value="2"/>
</dbReference>
<dbReference type="PROSITE" id="PS51473">
    <property type="entry name" value="GNK2"/>
    <property type="match status" value="2"/>
</dbReference>